<reference key="1">
    <citation type="journal article" date="1994" name="J. Biol. Chem.">
        <title>Amplification of an adenylosuccinate synthetase gene in alanosine-resistant murine T-lymphoma cells. Molecular cloning of a cDNA encoding the 'non-muscle' isozyme.</title>
        <authorList>
            <person name="Guicherit O.M."/>
            <person name="Cooper B.F."/>
            <person name="Rudolph F.B."/>
            <person name="Kellems R.E."/>
        </authorList>
    </citation>
    <scope>NUCLEOTIDE SEQUENCE [MRNA]</scope>
    <source>
        <strain>129/Sv</strain>
        <tissue>Kidney</tissue>
    </source>
</reference>
<reference key="2">
    <citation type="journal article" date="2003" name="J. Biol. Chem.">
        <title>Variations in the response of mouse isozymes of adenylosuccinate synthetase to inhibitors of physiological relevance.</title>
        <authorList>
            <person name="Borza T."/>
            <person name="Iancu C.V."/>
            <person name="Pike E."/>
            <person name="Honzatko R.B."/>
            <person name="Fromm H.J."/>
        </authorList>
    </citation>
    <scope>NUCLEOTIDE SEQUENCE [MRNA]</scope>
    <scope>FUNCTION</scope>
    <scope>BIOPHYSICOCHEMICAL PROPERTIES</scope>
    <scope>CATALYTIC ACTIVITY</scope>
    <scope>ACTIVITY REGULATION</scope>
</reference>
<reference key="3">
    <citation type="journal article" date="2005" name="Science">
        <title>The transcriptional landscape of the mammalian genome.</title>
        <authorList>
            <person name="Carninci P."/>
            <person name="Kasukawa T."/>
            <person name="Katayama S."/>
            <person name="Gough J."/>
            <person name="Frith M.C."/>
            <person name="Maeda N."/>
            <person name="Oyama R."/>
            <person name="Ravasi T."/>
            <person name="Lenhard B."/>
            <person name="Wells C."/>
            <person name="Kodzius R."/>
            <person name="Shimokawa K."/>
            <person name="Bajic V.B."/>
            <person name="Brenner S.E."/>
            <person name="Batalov S."/>
            <person name="Forrest A.R."/>
            <person name="Zavolan M."/>
            <person name="Davis M.J."/>
            <person name="Wilming L.G."/>
            <person name="Aidinis V."/>
            <person name="Allen J.E."/>
            <person name="Ambesi-Impiombato A."/>
            <person name="Apweiler R."/>
            <person name="Aturaliya R.N."/>
            <person name="Bailey T.L."/>
            <person name="Bansal M."/>
            <person name="Baxter L."/>
            <person name="Beisel K.W."/>
            <person name="Bersano T."/>
            <person name="Bono H."/>
            <person name="Chalk A.M."/>
            <person name="Chiu K.P."/>
            <person name="Choudhary V."/>
            <person name="Christoffels A."/>
            <person name="Clutterbuck D.R."/>
            <person name="Crowe M.L."/>
            <person name="Dalla E."/>
            <person name="Dalrymple B.P."/>
            <person name="de Bono B."/>
            <person name="Della Gatta G."/>
            <person name="di Bernardo D."/>
            <person name="Down T."/>
            <person name="Engstrom P."/>
            <person name="Fagiolini M."/>
            <person name="Faulkner G."/>
            <person name="Fletcher C.F."/>
            <person name="Fukushima T."/>
            <person name="Furuno M."/>
            <person name="Futaki S."/>
            <person name="Gariboldi M."/>
            <person name="Georgii-Hemming P."/>
            <person name="Gingeras T.R."/>
            <person name="Gojobori T."/>
            <person name="Green R.E."/>
            <person name="Gustincich S."/>
            <person name="Harbers M."/>
            <person name="Hayashi Y."/>
            <person name="Hensch T.K."/>
            <person name="Hirokawa N."/>
            <person name="Hill D."/>
            <person name="Huminiecki L."/>
            <person name="Iacono M."/>
            <person name="Ikeo K."/>
            <person name="Iwama A."/>
            <person name="Ishikawa T."/>
            <person name="Jakt M."/>
            <person name="Kanapin A."/>
            <person name="Katoh M."/>
            <person name="Kawasawa Y."/>
            <person name="Kelso J."/>
            <person name="Kitamura H."/>
            <person name="Kitano H."/>
            <person name="Kollias G."/>
            <person name="Krishnan S.P."/>
            <person name="Kruger A."/>
            <person name="Kummerfeld S.K."/>
            <person name="Kurochkin I.V."/>
            <person name="Lareau L.F."/>
            <person name="Lazarevic D."/>
            <person name="Lipovich L."/>
            <person name="Liu J."/>
            <person name="Liuni S."/>
            <person name="McWilliam S."/>
            <person name="Madan Babu M."/>
            <person name="Madera M."/>
            <person name="Marchionni L."/>
            <person name="Matsuda H."/>
            <person name="Matsuzawa S."/>
            <person name="Miki H."/>
            <person name="Mignone F."/>
            <person name="Miyake S."/>
            <person name="Morris K."/>
            <person name="Mottagui-Tabar S."/>
            <person name="Mulder N."/>
            <person name="Nakano N."/>
            <person name="Nakauchi H."/>
            <person name="Ng P."/>
            <person name="Nilsson R."/>
            <person name="Nishiguchi S."/>
            <person name="Nishikawa S."/>
            <person name="Nori F."/>
            <person name="Ohara O."/>
            <person name="Okazaki Y."/>
            <person name="Orlando V."/>
            <person name="Pang K.C."/>
            <person name="Pavan W.J."/>
            <person name="Pavesi G."/>
            <person name="Pesole G."/>
            <person name="Petrovsky N."/>
            <person name="Piazza S."/>
            <person name="Reed J."/>
            <person name="Reid J.F."/>
            <person name="Ring B.Z."/>
            <person name="Ringwald M."/>
            <person name="Rost B."/>
            <person name="Ruan Y."/>
            <person name="Salzberg S.L."/>
            <person name="Sandelin A."/>
            <person name="Schneider C."/>
            <person name="Schoenbach C."/>
            <person name="Sekiguchi K."/>
            <person name="Semple C.A."/>
            <person name="Seno S."/>
            <person name="Sessa L."/>
            <person name="Sheng Y."/>
            <person name="Shibata Y."/>
            <person name="Shimada H."/>
            <person name="Shimada K."/>
            <person name="Silva D."/>
            <person name="Sinclair B."/>
            <person name="Sperling S."/>
            <person name="Stupka E."/>
            <person name="Sugiura K."/>
            <person name="Sultana R."/>
            <person name="Takenaka Y."/>
            <person name="Taki K."/>
            <person name="Tammoja K."/>
            <person name="Tan S.L."/>
            <person name="Tang S."/>
            <person name="Taylor M.S."/>
            <person name="Tegner J."/>
            <person name="Teichmann S.A."/>
            <person name="Ueda H.R."/>
            <person name="van Nimwegen E."/>
            <person name="Verardo R."/>
            <person name="Wei C.L."/>
            <person name="Yagi K."/>
            <person name="Yamanishi H."/>
            <person name="Zabarovsky E."/>
            <person name="Zhu S."/>
            <person name="Zimmer A."/>
            <person name="Hide W."/>
            <person name="Bult C."/>
            <person name="Grimmond S.M."/>
            <person name="Teasdale R.D."/>
            <person name="Liu E.T."/>
            <person name="Brusic V."/>
            <person name="Quackenbush J."/>
            <person name="Wahlestedt C."/>
            <person name="Mattick J.S."/>
            <person name="Hume D.A."/>
            <person name="Kai C."/>
            <person name="Sasaki D."/>
            <person name="Tomaru Y."/>
            <person name="Fukuda S."/>
            <person name="Kanamori-Katayama M."/>
            <person name="Suzuki M."/>
            <person name="Aoki J."/>
            <person name="Arakawa T."/>
            <person name="Iida J."/>
            <person name="Imamura K."/>
            <person name="Itoh M."/>
            <person name="Kato T."/>
            <person name="Kawaji H."/>
            <person name="Kawagashira N."/>
            <person name="Kawashima T."/>
            <person name="Kojima M."/>
            <person name="Kondo S."/>
            <person name="Konno H."/>
            <person name="Nakano K."/>
            <person name="Ninomiya N."/>
            <person name="Nishio T."/>
            <person name="Okada M."/>
            <person name="Plessy C."/>
            <person name="Shibata K."/>
            <person name="Shiraki T."/>
            <person name="Suzuki S."/>
            <person name="Tagami M."/>
            <person name="Waki K."/>
            <person name="Watahiki A."/>
            <person name="Okamura-Oho Y."/>
            <person name="Suzuki H."/>
            <person name="Kawai J."/>
            <person name="Hayashizaki Y."/>
        </authorList>
    </citation>
    <scope>NUCLEOTIDE SEQUENCE [LARGE SCALE MRNA]</scope>
    <source>
        <strain>C57BL/6J</strain>
        <strain>NOD</strain>
        <tissue>Cerebellum</tissue>
        <tissue>Liver</tissue>
    </source>
</reference>
<reference key="4">
    <citation type="journal article" date="2010" name="Cell">
        <title>A tissue-specific atlas of mouse protein phosphorylation and expression.</title>
        <authorList>
            <person name="Huttlin E.L."/>
            <person name="Jedrychowski M.P."/>
            <person name="Elias J.E."/>
            <person name="Goswami T."/>
            <person name="Rad R."/>
            <person name="Beausoleil S.A."/>
            <person name="Villen J."/>
            <person name="Haas W."/>
            <person name="Sowa M.E."/>
            <person name="Gygi S.P."/>
        </authorList>
    </citation>
    <scope>IDENTIFICATION BY MASS SPECTROMETRY [LARGE SCALE ANALYSIS]</scope>
    <source>
        <tissue>Brain</tissue>
        <tissue>Brown adipose tissue</tissue>
        <tissue>Heart</tissue>
        <tissue>Kidney</tissue>
        <tissue>Liver</tissue>
        <tissue>Lung</tissue>
        <tissue>Pancreas</tissue>
        <tissue>Spleen</tissue>
        <tissue>Testis</tissue>
    </source>
</reference>
<feature type="chain" id="PRO_0000095131" description="Adenylosuccinate synthetase isozyme 2">
    <location>
        <begin position="1"/>
        <end position="456"/>
    </location>
</feature>
<feature type="region of interest" description="Disordered" evidence="3">
    <location>
        <begin position="1"/>
        <end position="24"/>
    </location>
</feature>
<feature type="compositionally biased region" description="Polar residues" evidence="3">
    <location>
        <begin position="1"/>
        <end position="14"/>
    </location>
</feature>
<feature type="active site" description="Proton acceptor" evidence="2">
    <location>
        <position position="40"/>
    </location>
</feature>
<feature type="active site" description="Proton donor" evidence="2">
    <location>
        <position position="68"/>
    </location>
</feature>
<feature type="binding site" evidence="2">
    <location>
        <begin position="39"/>
        <end position="45"/>
    </location>
    <ligand>
        <name>GTP</name>
        <dbReference type="ChEBI" id="CHEBI:37565"/>
    </ligand>
</feature>
<feature type="binding site" description="in other chain" evidence="2">
    <location>
        <begin position="40"/>
        <end position="43"/>
    </location>
    <ligand>
        <name>IMP</name>
        <dbReference type="ChEBI" id="CHEBI:58053"/>
        <note>ligand shared between dimeric partners</note>
    </ligand>
</feature>
<feature type="binding site" evidence="2">
    <location>
        <position position="40"/>
    </location>
    <ligand>
        <name>Mg(2+)</name>
        <dbReference type="ChEBI" id="CHEBI:18420"/>
    </ligand>
</feature>
<feature type="binding site" evidence="2">
    <location>
        <position position="40"/>
    </location>
    <ligand>
        <name>substrate</name>
    </ligand>
</feature>
<feature type="binding site" description="in other chain" evidence="2">
    <location>
        <begin position="65"/>
        <end position="68"/>
    </location>
    <ligand>
        <name>IMP</name>
        <dbReference type="ChEBI" id="CHEBI:58053"/>
        <note>ligand shared between dimeric partners</note>
    </ligand>
</feature>
<feature type="binding site" evidence="2">
    <location>
        <begin position="67"/>
        <end position="69"/>
    </location>
    <ligand>
        <name>GTP</name>
        <dbReference type="ChEBI" id="CHEBI:37565"/>
    </ligand>
</feature>
<feature type="binding site" evidence="2">
    <location>
        <position position="67"/>
    </location>
    <ligand>
        <name>Mg(2+)</name>
        <dbReference type="ChEBI" id="CHEBI:18420"/>
    </ligand>
</feature>
<feature type="binding site" description="in other chain" evidence="2">
    <location>
        <position position="162"/>
    </location>
    <ligand>
        <name>IMP</name>
        <dbReference type="ChEBI" id="CHEBI:58053"/>
        <note>ligand shared between dimeric partners</note>
    </ligand>
</feature>
<feature type="binding site" evidence="2">
    <location>
        <position position="176"/>
    </location>
    <ligand>
        <name>IMP</name>
        <dbReference type="ChEBI" id="CHEBI:58053"/>
        <note>ligand shared between dimeric partners</note>
    </ligand>
</feature>
<feature type="binding site" description="in other chain" evidence="2">
    <location>
        <position position="255"/>
    </location>
    <ligand>
        <name>IMP</name>
        <dbReference type="ChEBI" id="CHEBI:58053"/>
        <note>ligand shared between dimeric partners</note>
    </ligand>
</feature>
<feature type="binding site" description="in other chain" evidence="2">
    <location>
        <position position="270"/>
    </location>
    <ligand>
        <name>IMP</name>
        <dbReference type="ChEBI" id="CHEBI:58053"/>
        <note>ligand shared between dimeric partners</note>
    </ligand>
</feature>
<feature type="binding site" evidence="2">
    <location>
        <begin position="330"/>
        <end position="336"/>
    </location>
    <ligand>
        <name>substrate</name>
    </ligand>
</feature>
<feature type="binding site" description="in other chain" evidence="2">
    <location>
        <position position="334"/>
    </location>
    <ligand>
        <name>IMP</name>
        <dbReference type="ChEBI" id="CHEBI:58053"/>
        <note>ligand shared between dimeric partners</note>
    </ligand>
</feature>
<feature type="binding site" evidence="2">
    <location>
        <position position="336"/>
    </location>
    <ligand>
        <name>GTP</name>
        <dbReference type="ChEBI" id="CHEBI:37565"/>
    </ligand>
</feature>
<feature type="binding site" evidence="2">
    <location>
        <begin position="362"/>
        <end position="364"/>
    </location>
    <ligand>
        <name>GTP</name>
        <dbReference type="ChEBI" id="CHEBI:37565"/>
    </ligand>
</feature>
<feature type="binding site" evidence="2">
    <location>
        <begin position="444"/>
        <end position="447"/>
    </location>
    <ligand>
        <name>GTP</name>
        <dbReference type="ChEBI" id="CHEBI:37565"/>
    </ligand>
</feature>
<feature type="sequence conflict" description="In Ref. 1; AAA19727." evidence="5" ref="1">
    <original>G</original>
    <variation>R</variation>
    <location>
        <position position="167"/>
    </location>
</feature>
<feature type="sequence conflict" description="In Ref. 1; AAA19727." evidence="5" ref="1">
    <original>A</original>
    <variation>T</variation>
    <location>
        <position position="199"/>
    </location>
</feature>
<sequence>MSISESSPAATSLPNGDCGRPRARSGGNRVTVVLGAQWGDEGKGKVVDLLAQDADIVCRCQGGNNAGHTVVVDSVEYDFHLLPSGIINPNVTAFIGNGVVIHLPGLFEEAEKNVQKGKGLDGWEKRLIISDRAHIVFDFHQAADGIQEQQRQEQAGKNLGTTKKGIGPVYSSKAARSGLRMCDLVSDFDGFSERFKVLANQYKSIYPTLEIDIEGELQQLKGYMERIKPMVKDGVYFLYEALHGPPKKILVEGANAALLDIDFGTYPFVTSSNCTVGGVCTGLGMPPQNVGEVYGVVKAYTTRVGIGAFPTEQDNEIGELLQTRGREFGVTTGRKRRCGWLDLVSLKYAHMINGFTALALTKLDILDMFTEIKVGVAYKLDGETIPHFPANQEVLNKVEVQYKTLPGWNTDISNARTFKELPVNAQNYVRFIEDELQIPVKWIGVGKSRESMIQLF</sequence>
<proteinExistence type="evidence at protein level"/>
<organism>
    <name type="scientific">Mus musculus</name>
    <name type="common">Mouse</name>
    <dbReference type="NCBI Taxonomy" id="10090"/>
    <lineage>
        <taxon>Eukaryota</taxon>
        <taxon>Metazoa</taxon>
        <taxon>Chordata</taxon>
        <taxon>Craniata</taxon>
        <taxon>Vertebrata</taxon>
        <taxon>Euteleostomi</taxon>
        <taxon>Mammalia</taxon>
        <taxon>Eutheria</taxon>
        <taxon>Euarchontoglires</taxon>
        <taxon>Glires</taxon>
        <taxon>Rodentia</taxon>
        <taxon>Myomorpha</taxon>
        <taxon>Muroidea</taxon>
        <taxon>Muridae</taxon>
        <taxon>Murinae</taxon>
        <taxon>Mus</taxon>
        <taxon>Mus</taxon>
    </lineage>
</organism>
<protein>
    <recommendedName>
        <fullName evidence="2">Adenylosuccinate synthetase isozyme 2</fullName>
        <shortName evidence="2">AMPSase 2</shortName>
        <shortName evidence="2">AdSS 2</shortName>
        <ecNumber evidence="2 4">6.3.4.4</ecNumber>
    </recommendedName>
    <alternativeName>
        <fullName evidence="2">Adenylosuccinate synthetase, acidic isozyme</fullName>
    </alternativeName>
    <alternativeName>
        <fullName evidence="2">Adenylosuccinate synthetase, liver isozyme</fullName>
        <shortName evidence="2">L-type adenylosuccinate synthetase</shortName>
    </alternativeName>
    <alternativeName>
        <fullName evidence="2">IMP--aspartate ligase 2</fullName>
    </alternativeName>
</protein>
<name>PURA2_MOUSE</name>
<dbReference type="EC" id="6.3.4.4" evidence="2 4"/>
<dbReference type="EMBL" id="L24554">
    <property type="protein sequence ID" value="AAA19727.1"/>
    <property type="molecule type" value="mRNA"/>
</dbReference>
<dbReference type="EMBL" id="AK004877">
    <property type="protein sequence ID" value="BAB23635.1"/>
    <property type="molecule type" value="mRNA"/>
</dbReference>
<dbReference type="EMBL" id="AK010263">
    <property type="protein sequence ID" value="BAB26805.1"/>
    <property type="molecule type" value="mRNA"/>
</dbReference>
<dbReference type="EMBL" id="AK028060">
    <property type="protein sequence ID" value="BAC25730.1"/>
    <property type="molecule type" value="mRNA"/>
</dbReference>
<dbReference type="EMBL" id="AK148420">
    <property type="protein sequence ID" value="BAE28543.1"/>
    <property type="molecule type" value="mRNA"/>
</dbReference>
<dbReference type="EMBL" id="AK170279">
    <property type="protein sequence ID" value="BAE41682.1"/>
    <property type="molecule type" value="mRNA"/>
</dbReference>
<dbReference type="CCDS" id="CCDS15555.1"/>
<dbReference type="PIR" id="A53162">
    <property type="entry name" value="A53162"/>
</dbReference>
<dbReference type="RefSeq" id="NP_031448.2">
    <property type="nucleotide sequence ID" value="NM_007422.3"/>
</dbReference>
<dbReference type="SMR" id="P46664"/>
<dbReference type="BioGRID" id="198011">
    <property type="interactions" value="13"/>
</dbReference>
<dbReference type="FunCoup" id="P46664">
    <property type="interactions" value="2960"/>
</dbReference>
<dbReference type="STRING" id="10090.ENSMUSP00000016105"/>
<dbReference type="GlyGen" id="P46664">
    <property type="glycosylation" value="1 site, 1 O-linked glycan (1 site)"/>
</dbReference>
<dbReference type="iPTMnet" id="P46664"/>
<dbReference type="PhosphoSitePlus" id="P46664"/>
<dbReference type="SwissPalm" id="P46664"/>
<dbReference type="REPRODUCTION-2DPAGE" id="P46664"/>
<dbReference type="REPRODUCTION-2DPAGE" id="Q9CQL9"/>
<dbReference type="jPOST" id="P46664"/>
<dbReference type="PaxDb" id="10090-ENSMUSP00000016105"/>
<dbReference type="ProteomicsDB" id="301889"/>
<dbReference type="Pumba" id="P46664"/>
<dbReference type="Antibodypedia" id="20829">
    <property type="antibodies" value="157 antibodies from 24 providers"/>
</dbReference>
<dbReference type="DNASU" id="11566"/>
<dbReference type="Ensembl" id="ENSMUST00000016105.9">
    <property type="protein sequence ID" value="ENSMUSP00000016105.9"/>
    <property type="gene ID" value="ENSMUSG00000015961.9"/>
</dbReference>
<dbReference type="GeneID" id="11566"/>
<dbReference type="KEGG" id="mmu:11566"/>
<dbReference type="UCSC" id="uc007dut.1">
    <property type="organism name" value="mouse"/>
</dbReference>
<dbReference type="AGR" id="MGI:87948"/>
<dbReference type="CTD" id="159"/>
<dbReference type="MGI" id="MGI:87948">
    <property type="gene designation" value="Adss2"/>
</dbReference>
<dbReference type="VEuPathDB" id="HostDB:ENSMUSG00000015961"/>
<dbReference type="eggNOG" id="KOG1355">
    <property type="taxonomic scope" value="Eukaryota"/>
</dbReference>
<dbReference type="GeneTree" id="ENSGT00390000015553"/>
<dbReference type="HOGENOM" id="CLU_029848_3_2_1"/>
<dbReference type="InParanoid" id="P46664"/>
<dbReference type="OMA" id="FHHAKPI"/>
<dbReference type="OrthoDB" id="10265645at2759"/>
<dbReference type="PhylomeDB" id="P46664"/>
<dbReference type="TreeFam" id="TF300486"/>
<dbReference type="Reactome" id="R-MMU-73817">
    <property type="pathway name" value="Purine ribonucleoside monophosphate biosynthesis"/>
</dbReference>
<dbReference type="UniPathway" id="UPA00075">
    <property type="reaction ID" value="UER00335"/>
</dbReference>
<dbReference type="BioGRID-ORCS" id="11566">
    <property type="hits" value="11 hits in 78 CRISPR screens"/>
</dbReference>
<dbReference type="ChiTaRS" id="Adss">
    <property type="organism name" value="mouse"/>
</dbReference>
<dbReference type="PRO" id="PR:P46664"/>
<dbReference type="Proteomes" id="UP000000589">
    <property type="component" value="Chromosome 1"/>
</dbReference>
<dbReference type="RNAct" id="P46664">
    <property type="molecule type" value="protein"/>
</dbReference>
<dbReference type="Bgee" id="ENSMUSG00000015961">
    <property type="expression patterns" value="Expressed in animal zygote and 266 other cell types or tissues"/>
</dbReference>
<dbReference type="ExpressionAtlas" id="P46664">
    <property type="expression patterns" value="baseline and differential"/>
</dbReference>
<dbReference type="GO" id="GO:0005829">
    <property type="term" value="C:cytosol"/>
    <property type="evidence" value="ECO:0000304"/>
    <property type="project" value="Reactome"/>
</dbReference>
<dbReference type="GO" id="GO:0005739">
    <property type="term" value="C:mitochondrion"/>
    <property type="evidence" value="ECO:0000250"/>
    <property type="project" value="UniProtKB"/>
</dbReference>
<dbReference type="GO" id="GO:0004019">
    <property type="term" value="F:adenylosuccinate synthase activity"/>
    <property type="evidence" value="ECO:0000314"/>
    <property type="project" value="MGI"/>
</dbReference>
<dbReference type="GO" id="GO:0005525">
    <property type="term" value="F:GTP binding"/>
    <property type="evidence" value="ECO:0007669"/>
    <property type="project" value="UniProtKB-UniRule"/>
</dbReference>
<dbReference type="GO" id="GO:0000287">
    <property type="term" value="F:magnesium ion binding"/>
    <property type="evidence" value="ECO:0007669"/>
    <property type="project" value="UniProtKB-UniRule"/>
</dbReference>
<dbReference type="GO" id="GO:0044208">
    <property type="term" value="P:'de novo' AMP biosynthetic process"/>
    <property type="evidence" value="ECO:0000315"/>
    <property type="project" value="MGI"/>
</dbReference>
<dbReference type="GO" id="GO:0006167">
    <property type="term" value="P:AMP biosynthetic process"/>
    <property type="evidence" value="ECO:0000314"/>
    <property type="project" value="MGI"/>
</dbReference>
<dbReference type="GO" id="GO:0044209">
    <property type="term" value="P:AMP salvage"/>
    <property type="evidence" value="ECO:0000304"/>
    <property type="project" value="MGI"/>
</dbReference>
<dbReference type="GO" id="GO:0006531">
    <property type="term" value="P:aspartate metabolic process"/>
    <property type="evidence" value="ECO:0007669"/>
    <property type="project" value="Ensembl"/>
</dbReference>
<dbReference type="GO" id="GO:0071257">
    <property type="term" value="P:cellular response to electrical stimulus"/>
    <property type="evidence" value="ECO:0007669"/>
    <property type="project" value="Ensembl"/>
</dbReference>
<dbReference type="GO" id="GO:0046040">
    <property type="term" value="P:IMP metabolic process"/>
    <property type="evidence" value="ECO:0007669"/>
    <property type="project" value="Ensembl"/>
</dbReference>
<dbReference type="GO" id="GO:0006164">
    <property type="term" value="P:purine nucleotide biosynthetic process"/>
    <property type="evidence" value="ECO:0000314"/>
    <property type="project" value="MGI"/>
</dbReference>
<dbReference type="GO" id="GO:0060359">
    <property type="term" value="P:response to ammonium ion"/>
    <property type="evidence" value="ECO:0007669"/>
    <property type="project" value="Ensembl"/>
</dbReference>
<dbReference type="GO" id="GO:0014074">
    <property type="term" value="P:response to purine-containing compound"/>
    <property type="evidence" value="ECO:0007669"/>
    <property type="project" value="Ensembl"/>
</dbReference>
<dbReference type="CDD" id="cd03108">
    <property type="entry name" value="AdSS"/>
    <property type="match status" value="1"/>
</dbReference>
<dbReference type="FunFam" id="3.90.170.10:FF:000001">
    <property type="entry name" value="Adenylosuccinate synthetase"/>
    <property type="match status" value="1"/>
</dbReference>
<dbReference type="FunFam" id="1.10.300.10:FF:000002">
    <property type="entry name" value="Adenylosuccinate synthetase, chloroplastic"/>
    <property type="match status" value="1"/>
</dbReference>
<dbReference type="Gene3D" id="3.40.440.10">
    <property type="entry name" value="Adenylosuccinate Synthetase, subunit A, domain 1"/>
    <property type="match status" value="1"/>
</dbReference>
<dbReference type="Gene3D" id="1.10.300.10">
    <property type="entry name" value="Adenylosuccinate Synthetase, subunit A, domain 2"/>
    <property type="match status" value="1"/>
</dbReference>
<dbReference type="Gene3D" id="3.90.170.10">
    <property type="entry name" value="Adenylosuccinate Synthetase, subunit A, domain 3"/>
    <property type="match status" value="1"/>
</dbReference>
<dbReference type="HAMAP" id="MF_00011">
    <property type="entry name" value="Adenylosucc_synth"/>
    <property type="match status" value="1"/>
</dbReference>
<dbReference type="HAMAP" id="MF_03127">
    <property type="entry name" value="Adenylosucc_synth_vert_acid"/>
    <property type="match status" value="1"/>
</dbReference>
<dbReference type="InterPro" id="IPR018220">
    <property type="entry name" value="Adenylosuccin_syn_GTP-bd"/>
</dbReference>
<dbReference type="InterPro" id="IPR033128">
    <property type="entry name" value="Adenylosuccin_syn_Lys_AS"/>
</dbReference>
<dbReference type="InterPro" id="IPR042109">
    <property type="entry name" value="Adenylosuccinate_synth_dom1"/>
</dbReference>
<dbReference type="InterPro" id="IPR042110">
    <property type="entry name" value="Adenylosuccinate_synth_dom2"/>
</dbReference>
<dbReference type="InterPro" id="IPR042111">
    <property type="entry name" value="Adenylosuccinate_synth_dom3"/>
</dbReference>
<dbReference type="InterPro" id="IPR001114">
    <property type="entry name" value="Adenylosuccinate_synthetase"/>
</dbReference>
<dbReference type="InterPro" id="IPR027529">
    <property type="entry name" value="AdSS_2_vert"/>
</dbReference>
<dbReference type="InterPro" id="IPR027417">
    <property type="entry name" value="P-loop_NTPase"/>
</dbReference>
<dbReference type="NCBIfam" id="NF002223">
    <property type="entry name" value="PRK01117.1"/>
    <property type="match status" value="1"/>
</dbReference>
<dbReference type="NCBIfam" id="TIGR00184">
    <property type="entry name" value="purA"/>
    <property type="match status" value="1"/>
</dbReference>
<dbReference type="PANTHER" id="PTHR11846">
    <property type="entry name" value="ADENYLOSUCCINATE SYNTHETASE"/>
    <property type="match status" value="1"/>
</dbReference>
<dbReference type="PANTHER" id="PTHR11846:SF13">
    <property type="entry name" value="ADENYLOSUCCINATE SYNTHETASE ISOZYME 2"/>
    <property type="match status" value="1"/>
</dbReference>
<dbReference type="Pfam" id="PF00709">
    <property type="entry name" value="Adenylsucc_synt"/>
    <property type="match status" value="1"/>
</dbReference>
<dbReference type="SMART" id="SM00788">
    <property type="entry name" value="Adenylsucc_synt"/>
    <property type="match status" value="1"/>
</dbReference>
<dbReference type="SUPFAM" id="SSF52540">
    <property type="entry name" value="P-loop containing nucleoside triphosphate hydrolases"/>
    <property type="match status" value="1"/>
</dbReference>
<dbReference type="PROSITE" id="PS01266">
    <property type="entry name" value="ADENYLOSUCCIN_SYN_1"/>
    <property type="match status" value="1"/>
</dbReference>
<dbReference type="PROSITE" id="PS00513">
    <property type="entry name" value="ADENYLOSUCCIN_SYN_2"/>
    <property type="match status" value="1"/>
</dbReference>
<keyword id="KW-0963">Cytoplasm</keyword>
<keyword id="KW-0342">GTP-binding</keyword>
<keyword id="KW-0436">Ligase</keyword>
<keyword id="KW-0460">Magnesium</keyword>
<keyword id="KW-0479">Metal-binding</keyword>
<keyword id="KW-0496">Mitochondrion</keyword>
<keyword id="KW-0547">Nucleotide-binding</keyword>
<keyword id="KW-0658">Purine biosynthesis</keyword>
<keyword id="KW-1185">Reference proteome</keyword>
<gene>
    <name type="primary">Adss2</name>
    <name evidence="6" type="synonym">Adss</name>
</gene>
<evidence type="ECO:0000250" key="1">
    <source>
        <dbReference type="UniProtKB" id="A4Z6H1"/>
    </source>
</evidence>
<evidence type="ECO:0000255" key="2">
    <source>
        <dbReference type="HAMAP-Rule" id="MF_03127"/>
    </source>
</evidence>
<evidence type="ECO:0000256" key="3">
    <source>
        <dbReference type="SAM" id="MobiDB-lite"/>
    </source>
</evidence>
<evidence type="ECO:0000269" key="4">
    <source>
    </source>
</evidence>
<evidence type="ECO:0000305" key="5"/>
<evidence type="ECO:0000312" key="6">
    <source>
        <dbReference type="MGI" id="MGI:87948"/>
    </source>
</evidence>
<comment type="function">
    <text evidence="4">Plays an important role in the de novo pathway and in the salvage pathway of purine nucleotide biosynthesis. Catalyzes the first committed step in the biosynthesis of AMP from IMP.</text>
</comment>
<comment type="catalytic activity">
    <reaction evidence="2 4">
        <text>IMP + L-aspartate + GTP = N(6)-(1,2-dicarboxyethyl)-AMP + GDP + phosphate + 2 H(+)</text>
        <dbReference type="Rhea" id="RHEA:15753"/>
        <dbReference type="ChEBI" id="CHEBI:15378"/>
        <dbReference type="ChEBI" id="CHEBI:29991"/>
        <dbReference type="ChEBI" id="CHEBI:37565"/>
        <dbReference type="ChEBI" id="CHEBI:43474"/>
        <dbReference type="ChEBI" id="CHEBI:57567"/>
        <dbReference type="ChEBI" id="CHEBI:58053"/>
        <dbReference type="ChEBI" id="CHEBI:58189"/>
        <dbReference type="EC" id="6.3.4.4"/>
    </reaction>
</comment>
<comment type="cofactor">
    <cofactor evidence="2">
        <name>Mg(2+)</name>
        <dbReference type="ChEBI" id="CHEBI:18420"/>
    </cofactor>
    <text evidence="2">Binds 1 Mg(2+) ion per subunit.</text>
</comment>
<comment type="activity regulation">
    <text evidence="4">Inhibited competitively by AMP and IMP and non-competitively by fructose 1,6-bisphosphate.</text>
</comment>
<comment type="biophysicochemical properties">
    <kinetics>
        <KM evidence="4">15 uM for GTP</KM>
        <KM evidence="4">12 uM for IMP</KM>
        <KM evidence="4">950 uM for L-aspartate</KM>
    </kinetics>
    <phDependence>
        <text evidence="4">Optimum pH is 6.6-6.9.</text>
    </phDependence>
</comment>
<comment type="pathway">
    <text evidence="2">Purine metabolism; AMP biosynthesis via de novo pathway; AMP from IMP: step 1/2.</text>
</comment>
<comment type="subunit">
    <text evidence="2">Homodimer.</text>
</comment>
<comment type="subcellular location">
    <subcellularLocation>
        <location evidence="2">Cytoplasm</location>
    </subcellularLocation>
    <subcellularLocation>
        <location evidence="1">Mitochondrion</location>
    </subcellularLocation>
</comment>
<comment type="similarity">
    <text evidence="2">Belongs to the adenylosuccinate synthetase family.</text>
</comment>
<accession>P46664</accession>
<accession>Q9CQL9</accession>